<accession>Q04XW6</accession>
<dbReference type="EC" id="2.7.7.38" evidence="1"/>
<dbReference type="EMBL" id="CP000348">
    <property type="protein sequence ID" value="ABJ80079.1"/>
    <property type="molecule type" value="Genomic_DNA"/>
</dbReference>
<dbReference type="RefSeq" id="WP_011671011.1">
    <property type="nucleotide sequence ID" value="NC_008508.1"/>
</dbReference>
<dbReference type="SMR" id="Q04XW6"/>
<dbReference type="KEGG" id="lbl:LBL_2738"/>
<dbReference type="HOGENOM" id="CLU_065038_0_1_12"/>
<dbReference type="UniPathway" id="UPA00030"/>
<dbReference type="UniPathway" id="UPA00358">
    <property type="reaction ID" value="UER00476"/>
</dbReference>
<dbReference type="GO" id="GO:0005829">
    <property type="term" value="C:cytosol"/>
    <property type="evidence" value="ECO:0007669"/>
    <property type="project" value="TreeGrafter"/>
</dbReference>
<dbReference type="GO" id="GO:0008690">
    <property type="term" value="F:3-deoxy-manno-octulosonate cytidylyltransferase activity"/>
    <property type="evidence" value="ECO:0007669"/>
    <property type="project" value="UniProtKB-UniRule"/>
</dbReference>
<dbReference type="GO" id="GO:0033468">
    <property type="term" value="P:CMP-keto-3-deoxy-D-manno-octulosonic acid biosynthetic process"/>
    <property type="evidence" value="ECO:0007669"/>
    <property type="project" value="UniProtKB-UniRule"/>
</dbReference>
<dbReference type="GO" id="GO:0009103">
    <property type="term" value="P:lipopolysaccharide biosynthetic process"/>
    <property type="evidence" value="ECO:0007669"/>
    <property type="project" value="UniProtKB-UniRule"/>
</dbReference>
<dbReference type="CDD" id="cd02517">
    <property type="entry name" value="CMP-KDO-Synthetase"/>
    <property type="match status" value="1"/>
</dbReference>
<dbReference type="FunFam" id="3.90.550.10:FF:000011">
    <property type="entry name" value="3-deoxy-manno-octulosonate cytidylyltransferase"/>
    <property type="match status" value="1"/>
</dbReference>
<dbReference type="Gene3D" id="3.90.550.10">
    <property type="entry name" value="Spore Coat Polysaccharide Biosynthesis Protein SpsA, Chain A"/>
    <property type="match status" value="1"/>
</dbReference>
<dbReference type="HAMAP" id="MF_00057">
    <property type="entry name" value="KdsB"/>
    <property type="match status" value="1"/>
</dbReference>
<dbReference type="InterPro" id="IPR003329">
    <property type="entry name" value="Cytidylyl_trans"/>
</dbReference>
<dbReference type="InterPro" id="IPR004528">
    <property type="entry name" value="KdsB"/>
</dbReference>
<dbReference type="InterPro" id="IPR029044">
    <property type="entry name" value="Nucleotide-diphossugar_trans"/>
</dbReference>
<dbReference type="NCBIfam" id="TIGR00466">
    <property type="entry name" value="kdsB"/>
    <property type="match status" value="1"/>
</dbReference>
<dbReference type="NCBIfam" id="NF003950">
    <property type="entry name" value="PRK05450.1-3"/>
    <property type="match status" value="1"/>
</dbReference>
<dbReference type="NCBIfam" id="NF003952">
    <property type="entry name" value="PRK05450.1-5"/>
    <property type="match status" value="1"/>
</dbReference>
<dbReference type="NCBIfam" id="NF009905">
    <property type="entry name" value="PRK13368.1"/>
    <property type="match status" value="1"/>
</dbReference>
<dbReference type="PANTHER" id="PTHR42866">
    <property type="entry name" value="3-DEOXY-MANNO-OCTULOSONATE CYTIDYLYLTRANSFERASE"/>
    <property type="match status" value="1"/>
</dbReference>
<dbReference type="PANTHER" id="PTHR42866:SF2">
    <property type="entry name" value="3-DEOXY-MANNO-OCTULOSONATE CYTIDYLYLTRANSFERASE, MITOCHONDRIAL"/>
    <property type="match status" value="1"/>
</dbReference>
<dbReference type="Pfam" id="PF02348">
    <property type="entry name" value="CTP_transf_3"/>
    <property type="match status" value="1"/>
</dbReference>
<dbReference type="SUPFAM" id="SSF53448">
    <property type="entry name" value="Nucleotide-diphospho-sugar transferases"/>
    <property type="match status" value="1"/>
</dbReference>
<reference key="1">
    <citation type="journal article" date="2006" name="Proc. Natl. Acad. Sci. U.S.A.">
        <title>Genome reduction in Leptospira borgpetersenii reflects limited transmission potential.</title>
        <authorList>
            <person name="Bulach D.M."/>
            <person name="Zuerner R.L."/>
            <person name="Wilson P."/>
            <person name="Seemann T."/>
            <person name="McGrath A."/>
            <person name="Cullen P.A."/>
            <person name="Davis J."/>
            <person name="Johnson M."/>
            <person name="Kuczek E."/>
            <person name="Alt D.P."/>
            <person name="Peterson-Burch B."/>
            <person name="Coppel R.L."/>
            <person name="Rood J.I."/>
            <person name="Davies J.K."/>
            <person name="Adler B."/>
        </authorList>
    </citation>
    <scope>NUCLEOTIDE SEQUENCE [LARGE SCALE GENOMIC DNA]</scope>
    <source>
        <strain>L550</strain>
    </source>
</reference>
<gene>
    <name evidence="1" type="primary">kdsB</name>
    <name type="ordered locus">LBL_2738</name>
</gene>
<name>KDSB_LEPBL</name>
<evidence type="ECO:0000255" key="1">
    <source>
        <dbReference type="HAMAP-Rule" id="MF_00057"/>
    </source>
</evidence>
<protein>
    <recommendedName>
        <fullName evidence="1">3-deoxy-manno-octulosonate cytidylyltransferase</fullName>
        <ecNumber evidence="1">2.7.7.38</ecNumber>
    </recommendedName>
    <alternativeName>
        <fullName evidence="1">CMP-2-keto-3-deoxyoctulosonic acid synthase</fullName>
        <shortName evidence="1">CKS</shortName>
        <shortName evidence="1">CMP-KDO synthase</shortName>
    </alternativeName>
</protein>
<sequence length="246" mass="27384">MVKILGVIPARYASSRFPGKPLVKIGDKTMIEWTYRNASRSTALSELVVATDDTRIHEVVQGFGGNSVMTRADHISGTDRIIEVANLFSEYSIIINIQGDEPGIEPELIDGVAGLKASHPEWKMSTAAVPLIDFSHGEDPNRVKVIIDRNGKAIYFSRSLIPSQFKQTVPLYRHLGIYGYDRDFLLKYNSLPKSNLEESESLEQLRAIEAGYGIGVYLAQEAGLSVDTPADLEVVIEDFKKRKWIT</sequence>
<feature type="chain" id="PRO_0000370086" description="3-deoxy-manno-octulosonate cytidylyltransferase">
    <location>
        <begin position="1"/>
        <end position="246"/>
    </location>
</feature>
<comment type="function">
    <text evidence="1">Activates KDO (a required 8-carbon sugar) for incorporation into bacterial lipopolysaccharide in Gram-negative bacteria.</text>
</comment>
<comment type="catalytic activity">
    <reaction evidence="1">
        <text>3-deoxy-alpha-D-manno-oct-2-ulosonate + CTP = CMP-3-deoxy-beta-D-manno-octulosonate + diphosphate</text>
        <dbReference type="Rhea" id="RHEA:23448"/>
        <dbReference type="ChEBI" id="CHEBI:33019"/>
        <dbReference type="ChEBI" id="CHEBI:37563"/>
        <dbReference type="ChEBI" id="CHEBI:85986"/>
        <dbReference type="ChEBI" id="CHEBI:85987"/>
        <dbReference type="EC" id="2.7.7.38"/>
    </reaction>
</comment>
<comment type="pathway">
    <text evidence="1">Nucleotide-sugar biosynthesis; CMP-3-deoxy-D-manno-octulosonate biosynthesis; CMP-3-deoxy-D-manno-octulosonate from 3-deoxy-D-manno-octulosonate and CTP: step 1/1.</text>
</comment>
<comment type="pathway">
    <text evidence="1">Bacterial outer membrane biogenesis; lipopolysaccharide biosynthesis.</text>
</comment>
<comment type="subcellular location">
    <subcellularLocation>
        <location evidence="1">Cytoplasm</location>
    </subcellularLocation>
</comment>
<comment type="similarity">
    <text evidence="1">Belongs to the KdsB family.</text>
</comment>
<organism>
    <name type="scientific">Leptospira borgpetersenii serovar Hardjo-bovis (strain L550)</name>
    <dbReference type="NCBI Taxonomy" id="355276"/>
    <lineage>
        <taxon>Bacteria</taxon>
        <taxon>Pseudomonadati</taxon>
        <taxon>Spirochaetota</taxon>
        <taxon>Spirochaetia</taxon>
        <taxon>Leptospirales</taxon>
        <taxon>Leptospiraceae</taxon>
        <taxon>Leptospira</taxon>
    </lineage>
</organism>
<proteinExistence type="inferred from homology"/>
<keyword id="KW-0963">Cytoplasm</keyword>
<keyword id="KW-0448">Lipopolysaccharide biosynthesis</keyword>
<keyword id="KW-0548">Nucleotidyltransferase</keyword>
<keyword id="KW-0808">Transferase</keyword>